<reference evidence="6" key="1">
    <citation type="journal article" date="2012" name="Mol. Ecol.">
        <title>Whole transcriptome analysis of the coral Acropora millepora reveals complex responses to CO(2)-driven acidification during the initiation of calcification.</title>
        <authorList>
            <person name="Moya A."/>
            <person name="Huisman L."/>
            <person name="Ball E.E."/>
            <person name="Hayward D.C."/>
            <person name="Grasso L.C."/>
            <person name="Chua C.M."/>
            <person name="Woo H.N."/>
            <person name="Gattuso J.P."/>
            <person name="Foret S."/>
            <person name="Miller D.J."/>
        </authorList>
    </citation>
    <scope>NUCLEOTIDE SEQUENCE [MRNA]</scope>
</reference>
<reference evidence="6" key="2">
    <citation type="journal article" date="2013" name="Mol. Biol. Evol.">
        <title>The skeletal proteome of the coral Acropora millepora: the evolution of calcification by co-option and domain shuffling.</title>
        <authorList>
            <person name="Ramos-Silva P."/>
            <person name="Kaandorp J."/>
            <person name="Huisman L."/>
            <person name="Marie B."/>
            <person name="Zanella-Cleon I."/>
            <person name="Guichard N."/>
            <person name="Miller D.J."/>
            <person name="Marin F."/>
        </authorList>
    </citation>
    <scope>PROTEIN SEQUENCE OF 106-121; 239-257 AND 272-293</scope>
    <scope>TISSUE SPECIFICITY</scope>
    <scope>IDENTIFICATION BY MASS SPECTROMETRY</scope>
</reference>
<name>CDP_ACRMI</name>
<protein>
    <recommendedName>
        <fullName evidence="5">CUB domain-containing protein</fullName>
    </recommendedName>
</protein>
<feature type="signal peptide" evidence="1">
    <location>
        <begin position="1"/>
        <end position="18"/>
    </location>
</feature>
<feature type="chain" id="PRO_0000429493" description="CUB domain-containing protein" evidence="1">
    <location>
        <begin position="19"/>
        <end position="409"/>
    </location>
</feature>
<feature type="domain" description="CUB" evidence="2">
    <location>
        <begin position="232"/>
        <end position="338"/>
    </location>
</feature>
<feature type="region of interest" description="Disordered" evidence="3">
    <location>
        <begin position="154"/>
        <end position="230"/>
    </location>
</feature>
<feature type="region of interest" description="Disordered" evidence="3">
    <location>
        <begin position="389"/>
        <end position="409"/>
    </location>
</feature>
<feature type="compositionally biased region" description="Low complexity" evidence="3">
    <location>
        <begin position="154"/>
        <end position="229"/>
    </location>
</feature>
<feature type="compositionally biased region" description="Low complexity" evidence="3">
    <location>
        <begin position="392"/>
        <end position="409"/>
    </location>
</feature>
<feature type="disulfide bond" evidence="2">
    <location>
        <begin position="232"/>
        <end position="257"/>
    </location>
</feature>
<sequence length="409" mass="44777">MFLFSLTVLSALVLITESIPSVATDFPFFEITKKFDDIETYNNDYGILKFQEQEPMENLTCASCEAPSERECTLNQTAVVCDQDPNIACLTFEAFNNFTMTTTFRRGCFLSGILCENACRSFNASQDGNLTSCVQDCCNSSLCNAGSLPTEVTTEASTTAQETTATSTTTKQSTGASTTAEPSTTAAPSTTTKQTTVASTTATTTKPTTAPQTRATTLPTTAPTTAPAPIACGGVLRGRGTFTSPGFPGNYPNNVRCEWRVFLPRRQAIVFRIVSLDLADPGDSLEFFDSGRVIRTFRGLSRRKRSPSHRQTTNEKVLGEGEDGYYDDQEYVDYYYYDGRRKREPYFYQRRKKRRQQDRIVIQGRNQVAGAIFQSDAAGNAAGFSTQFVQGAADSESEASASSESSDED</sequence>
<dbReference type="EMBL" id="JR989025">
    <property type="status" value="NOT_ANNOTATED_CDS"/>
    <property type="molecule type" value="mRNA"/>
</dbReference>
<dbReference type="OrthoDB" id="9935125at2759"/>
<dbReference type="GO" id="GO:0005615">
    <property type="term" value="C:extracellular space"/>
    <property type="evidence" value="ECO:0007669"/>
    <property type="project" value="TreeGrafter"/>
</dbReference>
<dbReference type="GO" id="GO:0004252">
    <property type="term" value="F:serine-type endopeptidase activity"/>
    <property type="evidence" value="ECO:0007669"/>
    <property type="project" value="TreeGrafter"/>
</dbReference>
<dbReference type="CDD" id="cd00041">
    <property type="entry name" value="CUB"/>
    <property type="match status" value="1"/>
</dbReference>
<dbReference type="CDD" id="cd23582">
    <property type="entry name" value="TFP_LU_ECD_TRP"/>
    <property type="match status" value="1"/>
</dbReference>
<dbReference type="Gene3D" id="2.60.120.290">
    <property type="entry name" value="Spermadhesin, CUB domain"/>
    <property type="match status" value="1"/>
</dbReference>
<dbReference type="InterPro" id="IPR000859">
    <property type="entry name" value="CUB_dom"/>
</dbReference>
<dbReference type="InterPro" id="IPR035914">
    <property type="entry name" value="Sperma_CUB_dom_sf"/>
</dbReference>
<dbReference type="PANTHER" id="PTHR24255">
    <property type="entry name" value="COMPLEMENT COMPONENT 1, S SUBCOMPONENT-RELATED"/>
    <property type="match status" value="1"/>
</dbReference>
<dbReference type="PANTHER" id="PTHR24255:SF31">
    <property type="entry name" value="CUBILIN-LIKE PROTEIN"/>
    <property type="match status" value="1"/>
</dbReference>
<dbReference type="Pfam" id="PF00431">
    <property type="entry name" value="CUB"/>
    <property type="match status" value="1"/>
</dbReference>
<dbReference type="SMART" id="SM00042">
    <property type="entry name" value="CUB"/>
    <property type="match status" value="1"/>
</dbReference>
<dbReference type="SUPFAM" id="SSF49854">
    <property type="entry name" value="Spermadhesin, CUB domain"/>
    <property type="match status" value="1"/>
</dbReference>
<dbReference type="PROSITE" id="PS01180">
    <property type="entry name" value="CUB"/>
    <property type="match status" value="1"/>
</dbReference>
<keyword id="KW-0903">Direct protein sequencing</keyword>
<keyword id="KW-1015">Disulfide bond</keyword>
<keyword id="KW-0964">Secreted</keyword>
<keyword id="KW-0732">Signal</keyword>
<evidence type="ECO:0000255" key="1"/>
<evidence type="ECO:0000255" key="2">
    <source>
        <dbReference type="PROSITE-ProRule" id="PRU00059"/>
    </source>
</evidence>
<evidence type="ECO:0000256" key="3">
    <source>
        <dbReference type="SAM" id="MobiDB-lite"/>
    </source>
</evidence>
<evidence type="ECO:0000269" key="4">
    <source>
    </source>
</evidence>
<evidence type="ECO:0000303" key="5">
    <source>
    </source>
</evidence>
<evidence type="ECO:0000305" key="6"/>
<evidence type="ECO:0000305" key="7">
    <source>
    </source>
</evidence>
<proteinExistence type="evidence at protein level"/>
<organism>
    <name type="scientific">Acropora millepora</name>
    <name type="common">Staghorn coral</name>
    <name type="synonym">Heteropora millepora</name>
    <dbReference type="NCBI Taxonomy" id="45264"/>
    <lineage>
        <taxon>Eukaryota</taxon>
        <taxon>Metazoa</taxon>
        <taxon>Cnidaria</taxon>
        <taxon>Anthozoa</taxon>
        <taxon>Hexacorallia</taxon>
        <taxon>Scleractinia</taxon>
        <taxon>Astrocoeniina</taxon>
        <taxon>Acroporidae</taxon>
        <taxon>Acropora</taxon>
    </lineage>
</organism>
<accession>B3EX01</accession>
<comment type="subcellular location">
    <subcellularLocation>
        <location evidence="7">Secreted</location>
    </subcellularLocation>
</comment>
<comment type="tissue specificity">
    <text evidence="4">Component of the acid-insoluble and acid-soluble organic matrix of the aragonitic skeleton (at protein level).</text>
</comment>